<protein>
    <recommendedName>
        <fullName>SCO-spondin</fullName>
    </recommendedName>
</protein>
<reference key="1">
    <citation type="submission" date="2004-03" db="EMBL/GenBank/DDBJ databases">
        <title>Conservation of mammalian SCO-spondin.</title>
        <authorList>
            <person name="Meiniel O."/>
        </authorList>
    </citation>
    <scope>NUCLEOTIDE SEQUENCE [MRNA]</scope>
</reference>
<proteinExistence type="evidence at transcript level"/>
<dbReference type="EMBL" id="AJ629845">
    <property type="protein sequence ID" value="CAF33425.1"/>
    <property type="molecule type" value="mRNA"/>
</dbReference>
<dbReference type="RefSeq" id="NP_001007017.1">
    <property type="nucleotide sequence ID" value="NM_001007016.1"/>
</dbReference>
<dbReference type="RefSeq" id="XP_063142508.1">
    <property type="nucleotide sequence ID" value="XM_063286438.1"/>
</dbReference>
<dbReference type="SMR" id="Q700K0"/>
<dbReference type="FunCoup" id="Q700K0">
    <property type="interactions" value="78"/>
</dbReference>
<dbReference type="IntAct" id="Q700K0">
    <property type="interactions" value="1"/>
</dbReference>
<dbReference type="STRING" id="10116.ENSRNOP00000037189"/>
<dbReference type="GlyCosmos" id="Q700K0">
    <property type="glycosylation" value="43 sites, No reported glycans"/>
</dbReference>
<dbReference type="GlyGen" id="Q700K0">
    <property type="glycosylation" value="46 sites"/>
</dbReference>
<dbReference type="PhosphoSitePlus" id="Q700K0"/>
<dbReference type="PaxDb" id="10116-ENSRNOP00000037189"/>
<dbReference type="Ensembl" id="ENSRNOT00000035906.4">
    <property type="protein sequence ID" value="ENSRNOP00000037189.2"/>
    <property type="gene ID" value="ENSRNOG00000025848.5"/>
</dbReference>
<dbReference type="GeneID" id="474348"/>
<dbReference type="KEGG" id="rno:474348"/>
<dbReference type="UCSC" id="RGD:1549716">
    <property type="organism name" value="rat"/>
</dbReference>
<dbReference type="AGR" id="RGD:1549716"/>
<dbReference type="CTD" id="243369"/>
<dbReference type="RGD" id="1549716">
    <property type="gene designation" value="Sspo"/>
</dbReference>
<dbReference type="eggNOG" id="KOG1215">
    <property type="taxonomic scope" value="Eukaryota"/>
</dbReference>
<dbReference type="eggNOG" id="KOG1216">
    <property type="taxonomic scope" value="Eukaryota"/>
</dbReference>
<dbReference type="eggNOG" id="KOG3509">
    <property type="taxonomic scope" value="Eukaryota"/>
</dbReference>
<dbReference type="eggNOG" id="KOG3538">
    <property type="taxonomic scope" value="Eukaryota"/>
</dbReference>
<dbReference type="eggNOG" id="KOG4475">
    <property type="taxonomic scope" value="Eukaryota"/>
</dbReference>
<dbReference type="GeneTree" id="ENSGT00940000155829"/>
<dbReference type="HOGENOM" id="CLU_223278_0_0_1"/>
<dbReference type="InParanoid" id="Q700K0"/>
<dbReference type="OMA" id="QTKNELC"/>
<dbReference type="OrthoDB" id="6262482at2759"/>
<dbReference type="PhylomeDB" id="Q700K0"/>
<dbReference type="TreeFam" id="TF344272"/>
<dbReference type="Reactome" id="R-RNO-5173214">
    <property type="pathway name" value="O-glycosylation of TSR domain-containing proteins"/>
</dbReference>
<dbReference type="PRO" id="PR:Q700K0"/>
<dbReference type="Proteomes" id="UP000002494">
    <property type="component" value="Chromosome 4"/>
</dbReference>
<dbReference type="Bgee" id="ENSRNOG00000025848">
    <property type="expression patterns" value="Expressed in adult mammalian kidney and 4 other cell types or tissues"/>
</dbReference>
<dbReference type="GO" id="GO:0005737">
    <property type="term" value="C:cytoplasm"/>
    <property type="evidence" value="ECO:0000266"/>
    <property type="project" value="RGD"/>
</dbReference>
<dbReference type="GO" id="GO:0031012">
    <property type="term" value="C:extracellular matrix"/>
    <property type="evidence" value="ECO:0000318"/>
    <property type="project" value="GO_Central"/>
</dbReference>
<dbReference type="GO" id="GO:0005615">
    <property type="term" value="C:extracellular space"/>
    <property type="evidence" value="ECO:0000318"/>
    <property type="project" value="GO_Central"/>
</dbReference>
<dbReference type="GO" id="GO:0007155">
    <property type="term" value="P:cell adhesion"/>
    <property type="evidence" value="ECO:0007669"/>
    <property type="project" value="UniProtKB-KW"/>
</dbReference>
<dbReference type="CDD" id="cd00112">
    <property type="entry name" value="LDLa"/>
    <property type="match status" value="9"/>
</dbReference>
<dbReference type="CDD" id="cd19941">
    <property type="entry name" value="TIL"/>
    <property type="match status" value="14"/>
</dbReference>
<dbReference type="FunFam" id="2.20.100.10:FF:000004">
    <property type="entry name" value="Adhesion G protein-coupled receptor B2"/>
    <property type="match status" value="1"/>
</dbReference>
<dbReference type="FunFam" id="2.10.25.10:FF:000055">
    <property type="entry name" value="alpha-tectorin isoform X1"/>
    <property type="match status" value="4"/>
</dbReference>
<dbReference type="FunFam" id="2.20.100.10:FF:000051">
    <property type="entry name" value="Cartilage intermediate layer protein 2"/>
    <property type="match status" value="2"/>
</dbReference>
<dbReference type="FunFam" id="2.20.100.10:FF:000067">
    <property type="entry name" value="Hemicentin 1"/>
    <property type="match status" value="1"/>
</dbReference>
<dbReference type="FunFam" id="2.20.100.10:FF:000104">
    <property type="entry name" value="Papilin"/>
    <property type="match status" value="1"/>
</dbReference>
<dbReference type="FunFam" id="4.10.400.10:FF:000167">
    <property type="entry name" value="Predicted protein"/>
    <property type="match status" value="1"/>
</dbReference>
<dbReference type="FunFam" id="2.10.25.10:FF:000217">
    <property type="entry name" value="SCO-spondin"/>
    <property type="match status" value="3"/>
</dbReference>
<dbReference type="FunFam" id="2.20.100.10:FF:000080">
    <property type="entry name" value="SCO-spondin"/>
    <property type="match status" value="3"/>
</dbReference>
<dbReference type="FunFam" id="2.60.120.260:FF:000267">
    <property type="entry name" value="SCO-spondin"/>
    <property type="match status" value="1"/>
</dbReference>
<dbReference type="FunFam" id="4.10.400.10:FF:000208">
    <property type="entry name" value="SCO-spondin"/>
    <property type="match status" value="1"/>
</dbReference>
<dbReference type="FunFam" id="2.20.100.10:FF:000152">
    <property type="entry name" value="SCO-spondin isoform X3"/>
    <property type="match status" value="1"/>
</dbReference>
<dbReference type="FunFam" id="2.20.100.10:FF:000093">
    <property type="entry name" value="SCO-spondin-like isoform 1"/>
    <property type="match status" value="1"/>
</dbReference>
<dbReference type="FunFam" id="2.20.100.10:FF:000001">
    <property type="entry name" value="semaphorin-5A isoform X1"/>
    <property type="match status" value="4"/>
</dbReference>
<dbReference type="FunFam" id="2.20.100.10:FF:000002">
    <property type="entry name" value="Unc-5 netrin receptor C"/>
    <property type="match status" value="1"/>
</dbReference>
<dbReference type="Gene3D" id="2.40.128.620">
    <property type="match status" value="1"/>
</dbReference>
<dbReference type="Gene3D" id="2.60.120.260">
    <property type="entry name" value="Galactose-binding domain-like"/>
    <property type="match status" value="1"/>
</dbReference>
<dbReference type="Gene3D" id="2.10.25.10">
    <property type="entry name" value="Laminin"/>
    <property type="match status" value="15"/>
</dbReference>
<dbReference type="Gene3D" id="4.10.400.10">
    <property type="entry name" value="Low-density Lipoprotein Receptor"/>
    <property type="match status" value="9"/>
</dbReference>
<dbReference type="Gene3D" id="2.20.100.10">
    <property type="entry name" value="Thrombospondin type-1 (TSP1) repeat"/>
    <property type="match status" value="24"/>
</dbReference>
<dbReference type="InterPro" id="IPR006207">
    <property type="entry name" value="Cys_knot_C"/>
</dbReference>
<dbReference type="InterPro" id="IPR000421">
    <property type="entry name" value="FA58C"/>
</dbReference>
<dbReference type="InterPro" id="IPR008979">
    <property type="entry name" value="Galactose-bd-like_sf"/>
</dbReference>
<dbReference type="InterPro" id="IPR036055">
    <property type="entry name" value="LDL_receptor-like_sf"/>
</dbReference>
<dbReference type="InterPro" id="IPR023415">
    <property type="entry name" value="LDLR_class-A_CS"/>
</dbReference>
<dbReference type="InterPro" id="IPR002172">
    <property type="entry name" value="LDrepeatLR_classA_rpt"/>
</dbReference>
<dbReference type="InterPro" id="IPR050780">
    <property type="entry name" value="Mucin_vWF_Thrombospondin_sf"/>
</dbReference>
<dbReference type="InterPro" id="IPR036084">
    <property type="entry name" value="Ser_inhib-like_sf"/>
</dbReference>
<dbReference type="InterPro" id="IPR002919">
    <property type="entry name" value="TIL_dom"/>
</dbReference>
<dbReference type="InterPro" id="IPR000884">
    <property type="entry name" value="TSP1_rpt"/>
</dbReference>
<dbReference type="InterPro" id="IPR036383">
    <property type="entry name" value="TSP1_rpt_sf"/>
</dbReference>
<dbReference type="InterPro" id="IPR014853">
    <property type="entry name" value="VWF/SSPO/ZAN-like_Cys-rich_dom"/>
</dbReference>
<dbReference type="InterPro" id="IPR001007">
    <property type="entry name" value="VWF_dom"/>
</dbReference>
<dbReference type="InterPro" id="IPR001846">
    <property type="entry name" value="VWF_type-D"/>
</dbReference>
<dbReference type="PANTHER" id="PTHR11339">
    <property type="entry name" value="EXTRACELLULAR MATRIX GLYCOPROTEIN RELATED"/>
    <property type="match status" value="1"/>
</dbReference>
<dbReference type="PANTHER" id="PTHR11339:SF396">
    <property type="entry name" value="SCO-SPONDIN"/>
    <property type="match status" value="1"/>
</dbReference>
<dbReference type="Pfam" id="PF08742">
    <property type="entry name" value="C8"/>
    <property type="match status" value="3"/>
</dbReference>
<dbReference type="Pfam" id="PF00754">
    <property type="entry name" value="F5_F8_type_C"/>
    <property type="match status" value="1"/>
</dbReference>
<dbReference type="Pfam" id="PF00057">
    <property type="entry name" value="Ldl_recept_a"/>
    <property type="match status" value="8"/>
</dbReference>
<dbReference type="Pfam" id="PF01826">
    <property type="entry name" value="TIL"/>
    <property type="match status" value="12"/>
</dbReference>
<dbReference type="Pfam" id="PF00090">
    <property type="entry name" value="TSP_1"/>
    <property type="match status" value="22"/>
</dbReference>
<dbReference type="Pfam" id="PF00093">
    <property type="entry name" value="VWC"/>
    <property type="match status" value="1"/>
</dbReference>
<dbReference type="Pfam" id="PF00094">
    <property type="entry name" value="VWD"/>
    <property type="match status" value="3"/>
</dbReference>
<dbReference type="Pfam" id="PF23244">
    <property type="entry name" value="VWF"/>
    <property type="match status" value="2"/>
</dbReference>
<dbReference type="PRINTS" id="PR00261">
    <property type="entry name" value="LDLRECEPTOR"/>
</dbReference>
<dbReference type="SMART" id="SM00832">
    <property type="entry name" value="C8"/>
    <property type="match status" value="3"/>
</dbReference>
<dbReference type="SMART" id="SM00192">
    <property type="entry name" value="LDLa"/>
    <property type="match status" value="10"/>
</dbReference>
<dbReference type="SMART" id="SM00209">
    <property type="entry name" value="TSP1"/>
    <property type="match status" value="25"/>
</dbReference>
<dbReference type="SMART" id="SM00214">
    <property type="entry name" value="VWC"/>
    <property type="match status" value="5"/>
</dbReference>
<dbReference type="SMART" id="SM00215">
    <property type="entry name" value="VWC_out"/>
    <property type="match status" value="9"/>
</dbReference>
<dbReference type="SMART" id="SM00216">
    <property type="entry name" value="VWD"/>
    <property type="match status" value="3"/>
</dbReference>
<dbReference type="SUPFAM" id="SSF57603">
    <property type="entry name" value="FnI-like domain"/>
    <property type="match status" value="4"/>
</dbReference>
<dbReference type="SUPFAM" id="SSF49785">
    <property type="entry name" value="Galactose-binding domain-like"/>
    <property type="match status" value="1"/>
</dbReference>
<dbReference type="SUPFAM" id="SSF57424">
    <property type="entry name" value="LDL receptor-like module"/>
    <property type="match status" value="10"/>
</dbReference>
<dbReference type="SUPFAM" id="SSF57567">
    <property type="entry name" value="Serine protease inhibitors"/>
    <property type="match status" value="15"/>
</dbReference>
<dbReference type="SUPFAM" id="SSF82895">
    <property type="entry name" value="TSP-1 type 1 repeat"/>
    <property type="match status" value="25"/>
</dbReference>
<dbReference type="PROSITE" id="PS01225">
    <property type="entry name" value="CTCK_2"/>
    <property type="match status" value="1"/>
</dbReference>
<dbReference type="PROSITE" id="PS01186">
    <property type="entry name" value="EGF_2"/>
    <property type="match status" value="2"/>
</dbReference>
<dbReference type="PROSITE" id="PS50022">
    <property type="entry name" value="FA58C_3"/>
    <property type="match status" value="1"/>
</dbReference>
<dbReference type="PROSITE" id="PS01209">
    <property type="entry name" value="LDLRA_1"/>
    <property type="match status" value="8"/>
</dbReference>
<dbReference type="PROSITE" id="PS50068">
    <property type="entry name" value="LDLRA_2"/>
    <property type="match status" value="10"/>
</dbReference>
<dbReference type="PROSITE" id="PS50092">
    <property type="entry name" value="TSP1"/>
    <property type="match status" value="24"/>
</dbReference>
<dbReference type="PROSITE" id="PS01208">
    <property type="entry name" value="VWFC_1"/>
    <property type="match status" value="1"/>
</dbReference>
<dbReference type="PROSITE" id="PS50184">
    <property type="entry name" value="VWFC_2"/>
    <property type="match status" value="2"/>
</dbReference>
<dbReference type="PROSITE" id="PS51233">
    <property type="entry name" value="VWFD"/>
    <property type="match status" value="3"/>
</dbReference>
<feature type="signal peptide" evidence="2">
    <location>
        <begin position="1"/>
        <end position="17"/>
    </location>
</feature>
<feature type="chain" id="PRO_0000245044" description="SCO-spondin">
    <location>
        <begin position="18"/>
        <end position="5141"/>
    </location>
</feature>
<feature type="domain" description="EMI">
    <location>
        <begin position="18"/>
        <end position="102"/>
    </location>
</feature>
<feature type="domain" description="VWFD 1" evidence="8">
    <location>
        <begin position="193"/>
        <end position="364"/>
    </location>
</feature>
<feature type="domain" description="TIL 1" evidence="2">
    <location>
        <begin position="472"/>
        <end position="527"/>
    </location>
</feature>
<feature type="domain" description="VWFD 2" evidence="8">
    <location>
        <begin position="565"/>
        <end position="738"/>
    </location>
</feature>
<feature type="domain" description="TIL 2" evidence="2">
    <location>
        <begin position="830"/>
        <end position="883"/>
    </location>
</feature>
<feature type="domain" description="VWFD 3" evidence="8">
    <location>
        <begin position="1017"/>
        <end position="1187"/>
    </location>
</feature>
<feature type="domain" description="TIL 3" evidence="2">
    <location>
        <begin position="1280"/>
        <end position="1336"/>
    </location>
</feature>
<feature type="domain" description="LDL-receptor class A 1" evidence="5">
    <location>
        <begin position="1380"/>
        <end position="1417"/>
    </location>
</feature>
<feature type="domain" description="LDL-receptor class A 2" evidence="5">
    <location>
        <begin position="1420"/>
        <end position="1456"/>
    </location>
</feature>
<feature type="domain" description="LDL-receptor class A 3" evidence="5">
    <location>
        <begin position="1456"/>
        <end position="1492"/>
    </location>
</feature>
<feature type="domain" description="LDL-receptor class A 4" evidence="5">
    <location>
        <begin position="1496"/>
        <end position="1534"/>
    </location>
</feature>
<feature type="domain" description="LDL-receptor class A 5" evidence="5">
    <location>
        <begin position="1569"/>
        <end position="1605"/>
    </location>
</feature>
<feature type="domain" description="LDL-receptor class A 6" evidence="5">
    <location>
        <begin position="1607"/>
        <end position="1646"/>
    </location>
</feature>
<feature type="domain" description="LDL-receptor class A 7" evidence="5">
    <location>
        <begin position="1660"/>
        <end position="1700"/>
    </location>
</feature>
<feature type="domain" description="TSP type-1 1" evidence="6">
    <location>
        <begin position="1699"/>
        <end position="1753"/>
    </location>
</feature>
<feature type="domain" description="TSP type-1 2" evidence="6">
    <location>
        <begin position="1755"/>
        <end position="1970"/>
    </location>
</feature>
<feature type="domain" description="EGF-like 1">
    <location>
        <begin position="1829"/>
        <end position="1868"/>
    </location>
</feature>
<feature type="domain" description="EGF-like 2">
    <location>
        <begin position="1869"/>
        <end position="1895"/>
    </location>
</feature>
<feature type="domain" description="VWFC 1" evidence="7">
    <location>
        <begin position="1970"/>
        <end position="2030"/>
    </location>
</feature>
<feature type="domain" description="F5/8 type C" evidence="4">
    <location>
        <begin position="2070"/>
        <end position="2226"/>
    </location>
</feature>
<feature type="domain" description="LDL-receptor class A 8" evidence="5">
    <location>
        <begin position="2235"/>
        <end position="2271"/>
    </location>
</feature>
<feature type="domain" description="LDL-receptor class A 9" evidence="5">
    <location>
        <begin position="2391"/>
        <end position="2427"/>
    </location>
</feature>
<feature type="domain" description="LDL-receptor class A 10" evidence="5">
    <location>
        <begin position="2448"/>
        <end position="2484"/>
    </location>
</feature>
<feature type="domain" description="TSP type-1 3" evidence="6">
    <location>
        <begin position="2485"/>
        <end position="2538"/>
    </location>
</feature>
<feature type="domain" description="TSP type-1 4" evidence="6">
    <location>
        <begin position="2540"/>
        <end position="2595"/>
    </location>
</feature>
<feature type="domain" description="TIL 4" evidence="2">
    <location>
        <begin position="2618"/>
        <end position="2660"/>
    </location>
</feature>
<feature type="domain" description="TSP type-1 5" evidence="6">
    <location>
        <begin position="2700"/>
        <end position="2754"/>
    </location>
</feature>
<feature type="domain" description="TSP type-1 6" evidence="6">
    <location>
        <begin position="2758"/>
        <end position="2813"/>
    </location>
</feature>
<feature type="domain" description="TSP type-1 7" evidence="6">
    <location>
        <begin position="2815"/>
        <end position="2868"/>
    </location>
</feature>
<feature type="domain" description="TSP type-1 8" evidence="6">
    <location>
        <begin position="2969"/>
        <end position="3024"/>
    </location>
</feature>
<feature type="domain" description="TSP type-1 9" evidence="6">
    <location>
        <begin position="3025"/>
        <end position="3068"/>
    </location>
</feature>
<feature type="domain" description="TIL 5" evidence="2">
    <location>
        <begin position="3075"/>
        <end position="3127"/>
    </location>
</feature>
<feature type="domain" description="TSP type-1 10" evidence="6">
    <location>
        <begin position="3168"/>
        <end position="3235"/>
    </location>
</feature>
<feature type="domain" description="TSP type-1 11" evidence="6">
    <location>
        <begin position="3237"/>
        <end position="3292"/>
    </location>
</feature>
<feature type="domain" description="TIL 6" evidence="2">
    <location>
        <begin position="3300"/>
        <end position="3350"/>
    </location>
</feature>
<feature type="domain" description="TSP type-1 12" evidence="6">
    <location>
        <begin position="3393"/>
        <end position="3455"/>
    </location>
</feature>
<feature type="domain" description="TSP type-1 13" evidence="6">
    <location>
        <begin position="3457"/>
        <end position="3512"/>
    </location>
</feature>
<feature type="domain" description="TIL 7" evidence="2">
    <location>
        <begin position="3514"/>
        <end position="3570"/>
    </location>
</feature>
<feature type="domain" description="TSP type-1 14" evidence="6">
    <location>
        <begin position="3630"/>
        <end position="3678"/>
    </location>
</feature>
<feature type="domain" description="TSP type-1 15" evidence="6">
    <location>
        <begin position="3806"/>
        <end position="3862"/>
    </location>
</feature>
<feature type="domain" description="TSP type-1 16" evidence="6">
    <location>
        <begin position="3876"/>
        <end position="3928"/>
    </location>
</feature>
<feature type="domain" description="TSP type-1 17" evidence="6">
    <location>
        <begin position="3942"/>
        <end position="3998"/>
    </location>
</feature>
<feature type="domain" description="TSP type-1 18" evidence="6">
    <location>
        <begin position="4000"/>
        <end position="4055"/>
    </location>
</feature>
<feature type="domain" description="TIL 8" evidence="2">
    <location>
        <begin position="4058"/>
        <end position="4113"/>
    </location>
</feature>
<feature type="domain" description="TSP type-1 19" evidence="6">
    <location>
        <begin position="4155"/>
        <end position="4208"/>
    </location>
</feature>
<feature type="domain" description="TSP type-1 20" evidence="6">
    <location>
        <begin position="4249"/>
        <end position="4304"/>
    </location>
</feature>
<feature type="domain" description="TSP type-1 21" evidence="6">
    <location>
        <begin position="4306"/>
        <end position="4362"/>
    </location>
</feature>
<feature type="domain" description="TSP type-1 22" evidence="6">
    <location>
        <begin position="4364"/>
        <end position="4418"/>
    </location>
</feature>
<feature type="domain" description="TIL 9" evidence="2">
    <location>
        <begin position="4422"/>
        <end position="4477"/>
    </location>
</feature>
<feature type="domain" description="TSP type-1 23" evidence="6">
    <location>
        <begin position="4608"/>
        <end position="4659"/>
    </location>
</feature>
<feature type="domain" description="TIL 10" evidence="2">
    <location>
        <begin position="4673"/>
        <end position="4719"/>
    </location>
</feature>
<feature type="domain" description="TSP type-1 24" evidence="6">
    <location>
        <begin position="4759"/>
        <end position="4812"/>
    </location>
</feature>
<feature type="domain" description="TIL 11" evidence="2">
    <location>
        <begin position="4814"/>
        <end position="4868"/>
    </location>
</feature>
<feature type="domain" description="TIL 12" evidence="2">
    <location>
        <begin position="4920"/>
        <end position="4978"/>
    </location>
</feature>
<feature type="domain" description="VWFC 2" evidence="7">
    <location>
        <begin position="4978"/>
        <end position="5036"/>
    </location>
</feature>
<feature type="domain" description="CTCK" evidence="3">
    <location>
        <begin position="5047"/>
        <end position="5134"/>
    </location>
</feature>
<feature type="region of interest" description="Disordered" evidence="9">
    <location>
        <begin position="1533"/>
        <end position="1567"/>
    </location>
</feature>
<feature type="region of interest" description="Disordered" evidence="9">
    <location>
        <begin position="2087"/>
        <end position="2109"/>
    </location>
</feature>
<feature type="region of interest" description="Disordered" evidence="9">
    <location>
        <begin position="2262"/>
        <end position="2335"/>
    </location>
</feature>
<feature type="compositionally biased region" description="Low complexity" evidence="9">
    <location>
        <begin position="1549"/>
        <end position="1567"/>
    </location>
</feature>
<feature type="compositionally biased region" description="Polar residues" evidence="9">
    <location>
        <begin position="2276"/>
        <end position="2294"/>
    </location>
</feature>
<feature type="compositionally biased region" description="Basic and acidic residues" evidence="9">
    <location>
        <begin position="2301"/>
        <end position="2314"/>
    </location>
</feature>
<feature type="glycosylation site" description="N-linked (GlcNAc...) asparagine" evidence="2">
    <location>
        <position position="88"/>
    </location>
</feature>
<feature type="glycosylation site" description="N-linked (GlcNAc...) asparagine" evidence="2">
    <location>
        <position position="130"/>
    </location>
</feature>
<feature type="glycosylation site" description="N-linked (GlcNAc...) asparagine" evidence="2">
    <location>
        <position position="150"/>
    </location>
</feature>
<feature type="glycosylation site" description="N-linked (GlcNAc...) asparagine" evidence="2">
    <location>
        <position position="167"/>
    </location>
</feature>
<feature type="glycosylation site" description="N-linked (GlcNAc...) asparagine" evidence="2">
    <location>
        <position position="657"/>
    </location>
</feature>
<feature type="glycosylation site" description="N-linked (GlcNAc...) asparagine" evidence="2">
    <location>
        <position position="822"/>
    </location>
</feature>
<feature type="glycosylation site" description="N-linked (GlcNAc...) asparagine" evidence="2">
    <location>
        <position position="895"/>
    </location>
</feature>
<feature type="glycosylation site" description="N-linked (GlcNAc...) asparagine" evidence="2">
    <location>
        <position position="949"/>
    </location>
</feature>
<feature type="glycosylation site" description="N-linked (GlcNAc...) asparagine" evidence="2">
    <location>
        <position position="991"/>
    </location>
</feature>
<feature type="glycosylation site" description="N-linked (GlcNAc...) asparagine" evidence="2">
    <location>
        <position position="1357"/>
    </location>
</feature>
<feature type="glycosylation site" description="N-linked (GlcNAc...) asparagine" evidence="2">
    <location>
        <position position="1655"/>
    </location>
</feature>
<feature type="glycosylation site" description="N-linked (GlcNAc...) asparagine" evidence="2">
    <location>
        <position position="1668"/>
    </location>
</feature>
<feature type="glycosylation site" description="N-linked (GlcNAc...) asparagine" evidence="2">
    <location>
        <position position="1725"/>
    </location>
</feature>
<feature type="glycosylation site" description="N-linked (GlcNAc...) asparagine" evidence="2">
    <location>
        <position position="1814"/>
    </location>
</feature>
<feature type="glycosylation site" description="N-linked (GlcNAc...) asparagine" evidence="2">
    <location>
        <position position="2035"/>
    </location>
</feature>
<feature type="glycosylation site" description="N-linked (GlcNAc...) asparagine" evidence="2">
    <location>
        <position position="2130"/>
    </location>
</feature>
<feature type="glycosylation site" description="N-linked (GlcNAc...) asparagine" evidence="2">
    <location>
        <position position="2148"/>
    </location>
</feature>
<feature type="glycosylation site" description="N-linked (GlcNAc...) asparagine" evidence="2">
    <location>
        <position position="2630"/>
    </location>
</feature>
<feature type="glycosylation site" description="N-linked (GlcNAc...) asparagine" evidence="2">
    <location>
        <position position="2679"/>
    </location>
</feature>
<feature type="glycosylation site" description="N-linked (GlcNAc...) asparagine" evidence="2">
    <location>
        <position position="2921"/>
    </location>
</feature>
<feature type="glycosylation site" description="N-linked (GlcNAc...) asparagine" evidence="2">
    <location>
        <position position="2951"/>
    </location>
</feature>
<feature type="glycosylation site" description="N-linked (GlcNAc...) asparagine" evidence="2">
    <location>
        <position position="3046"/>
    </location>
</feature>
<feature type="glycosylation site" description="N-linked (GlcNAc...) asparagine" evidence="2">
    <location>
        <position position="3101"/>
    </location>
</feature>
<feature type="glycosylation site" description="N-linked (GlcNAc...) asparagine" evidence="2">
    <location>
        <position position="3148"/>
    </location>
</feature>
<feature type="glycosylation site" description="N-linked (GlcNAc...) asparagine" evidence="2">
    <location>
        <position position="3158"/>
    </location>
</feature>
<feature type="glycosylation site" description="N-linked (GlcNAc...) asparagine" evidence="2">
    <location>
        <position position="3295"/>
    </location>
</feature>
<feature type="glycosylation site" description="N-linked (GlcNAc...) asparagine" evidence="2">
    <location>
        <position position="3384"/>
    </location>
</feature>
<feature type="glycosylation site" description="N-linked (GlcNAc...) asparagine" evidence="2">
    <location>
        <position position="3506"/>
    </location>
</feature>
<feature type="glycosylation site" description="N-linked (GlcNAc...) asparagine" evidence="2">
    <location>
        <position position="3584"/>
    </location>
</feature>
<feature type="glycosylation site" description="N-linked (GlcNAc...) asparagine" evidence="2">
    <location>
        <position position="3611"/>
    </location>
</feature>
<feature type="glycosylation site" description="N-linked (GlcNAc...) asparagine" evidence="2">
    <location>
        <position position="3787"/>
    </location>
</feature>
<feature type="glycosylation site" description="N-linked (GlcNAc...) asparagine" evidence="2">
    <location>
        <position position="3910"/>
    </location>
</feature>
<feature type="glycosylation site" description="N-linked (GlcNAc...) asparagine" evidence="2">
    <location>
        <position position="4135"/>
    </location>
</feature>
<feature type="glycosylation site" description="N-linked (GlcNAc...) asparagine" evidence="2">
    <location>
        <position position="4345"/>
    </location>
</feature>
<feature type="glycosylation site" description="N-linked (GlcNAc...) asparagine" evidence="2">
    <location>
        <position position="4416"/>
    </location>
</feature>
<feature type="glycosylation site" description="N-linked (GlcNAc...) asparagine" evidence="2">
    <location>
        <position position="4557"/>
    </location>
</feature>
<feature type="glycosylation site" description="N-linked (GlcNAc...) asparagine" evidence="2">
    <location>
        <position position="4727"/>
    </location>
</feature>
<feature type="glycosylation site" description="N-linked (GlcNAc...) asparagine" evidence="2">
    <location>
        <position position="4744"/>
    </location>
</feature>
<feature type="glycosylation site" description="N-linked (GlcNAc...) asparagine" evidence="2">
    <location>
        <position position="4749"/>
    </location>
</feature>
<feature type="glycosylation site" description="N-linked (GlcNAc...) asparagine" evidence="2">
    <location>
        <position position="4899"/>
    </location>
</feature>
<feature type="glycosylation site" description="N-linked (GlcNAc...) asparagine" evidence="2">
    <location>
        <position position="4942"/>
    </location>
</feature>
<feature type="glycosylation site" description="N-linked (GlcNAc...) asparagine" evidence="2">
    <location>
        <position position="4949"/>
    </location>
</feature>
<feature type="glycosylation site" description="N-linked (GlcNAc...) asparagine" evidence="2">
    <location>
        <position position="5055"/>
    </location>
</feature>
<feature type="disulfide bond" evidence="8">
    <location>
        <begin position="195"/>
        <end position="325"/>
    </location>
</feature>
<feature type="disulfide bond" evidence="8">
    <location>
        <begin position="217"/>
        <end position="363"/>
    </location>
</feature>
<feature type="disulfide bond" evidence="8">
    <location>
        <begin position="239"/>
        <end position="245"/>
    </location>
</feature>
<feature type="disulfide bond" evidence="8">
    <location>
        <begin position="567"/>
        <end position="700"/>
    </location>
</feature>
<feature type="disulfide bond" evidence="8">
    <location>
        <begin position="591"/>
        <end position="737"/>
    </location>
</feature>
<feature type="disulfide bond" evidence="8">
    <location>
        <begin position="1019"/>
        <end position="1151"/>
    </location>
</feature>
<feature type="disulfide bond" evidence="8">
    <location>
        <begin position="1041"/>
        <end position="1186"/>
    </location>
</feature>
<feature type="disulfide bond" evidence="8">
    <location>
        <begin position="1062"/>
        <end position="1069"/>
    </location>
</feature>
<feature type="disulfide bond" evidence="5">
    <location>
        <begin position="1381"/>
        <end position="1394"/>
    </location>
</feature>
<feature type="disulfide bond" evidence="5">
    <location>
        <begin position="1388"/>
        <end position="1407"/>
    </location>
</feature>
<feature type="disulfide bond" evidence="5">
    <location>
        <begin position="1401"/>
        <end position="1416"/>
    </location>
</feature>
<feature type="disulfide bond" evidence="5">
    <location>
        <begin position="1421"/>
        <end position="1433"/>
    </location>
</feature>
<feature type="disulfide bond" evidence="5">
    <location>
        <begin position="1428"/>
        <end position="1446"/>
    </location>
</feature>
<feature type="disulfide bond" evidence="5">
    <location>
        <begin position="1440"/>
        <end position="1455"/>
    </location>
</feature>
<feature type="disulfide bond" evidence="5">
    <location>
        <begin position="1457"/>
        <end position="1469"/>
    </location>
</feature>
<feature type="disulfide bond" evidence="5">
    <location>
        <begin position="1464"/>
        <end position="1482"/>
    </location>
</feature>
<feature type="disulfide bond" evidence="5">
    <location>
        <begin position="1476"/>
        <end position="1491"/>
    </location>
</feature>
<feature type="disulfide bond" evidence="5">
    <location>
        <begin position="1497"/>
        <end position="1509"/>
    </location>
</feature>
<feature type="disulfide bond" evidence="5">
    <location>
        <begin position="1504"/>
        <end position="1522"/>
    </location>
</feature>
<feature type="disulfide bond" evidence="5">
    <location>
        <begin position="1516"/>
        <end position="1533"/>
    </location>
</feature>
<feature type="disulfide bond" evidence="5">
    <location>
        <begin position="1570"/>
        <end position="1582"/>
    </location>
</feature>
<feature type="disulfide bond" evidence="5">
    <location>
        <begin position="1577"/>
        <end position="1595"/>
    </location>
</feature>
<feature type="disulfide bond" evidence="5">
    <location>
        <begin position="1589"/>
        <end position="1604"/>
    </location>
</feature>
<feature type="disulfide bond" evidence="5">
    <location>
        <begin position="1608"/>
        <end position="1621"/>
    </location>
</feature>
<feature type="disulfide bond" evidence="5">
    <location>
        <begin position="1615"/>
        <end position="1634"/>
    </location>
</feature>
<feature type="disulfide bond" evidence="5">
    <location>
        <begin position="1628"/>
        <end position="1645"/>
    </location>
</feature>
<feature type="disulfide bond" evidence="5">
    <location>
        <begin position="1661"/>
        <end position="1671"/>
    </location>
</feature>
<feature type="disulfide bond" evidence="5">
    <location>
        <begin position="1666"/>
        <end position="1684"/>
    </location>
</feature>
<feature type="disulfide bond" evidence="5">
    <location>
        <begin position="1678"/>
        <end position="1699"/>
    </location>
</feature>
<feature type="disulfide bond" evidence="6">
    <location>
        <begin position="1711"/>
        <end position="1747"/>
    </location>
</feature>
<feature type="disulfide bond" evidence="6">
    <location>
        <begin position="1715"/>
        <end position="1752"/>
    </location>
</feature>
<feature type="disulfide bond" evidence="6">
    <location>
        <begin position="1726"/>
        <end position="1737"/>
    </location>
</feature>
<feature type="disulfide bond" evidence="6">
    <location>
        <begin position="1767"/>
        <end position="1964"/>
    </location>
</feature>
<feature type="disulfide bond" evidence="6">
    <location>
        <begin position="1771"/>
        <end position="1969"/>
    </location>
</feature>
<feature type="disulfide bond" evidence="6">
    <location>
        <begin position="1781"/>
        <end position="1791"/>
    </location>
</feature>
<feature type="disulfide bond" evidence="4">
    <location>
        <begin position="2070"/>
        <end position="2226"/>
    </location>
</feature>
<feature type="disulfide bond" evidence="5">
    <location>
        <begin position="2236"/>
        <end position="2248"/>
    </location>
</feature>
<feature type="disulfide bond" evidence="5">
    <location>
        <begin position="2243"/>
        <end position="2261"/>
    </location>
</feature>
<feature type="disulfide bond" evidence="5">
    <location>
        <begin position="2255"/>
        <end position="2270"/>
    </location>
</feature>
<feature type="disulfide bond" evidence="5">
    <location>
        <begin position="2392"/>
        <end position="2404"/>
    </location>
</feature>
<feature type="disulfide bond" evidence="5">
    <location>
        <begin position="2399"/>
        <end position="2417"/>
    </location>
</feature>
<feature type="disulfide bond" evidence="5">
    <location>
        <begin position="2411"/>
        <end position="2426"/>
    </location>
</feature>
<feature type="disulfide bond" evidence="5">
    <location>
        <begin position="2449"/>
        <end position="2461"/>
    </location>
</feature>
<feature type="disulfide bond" evidence="5">
    <location>
        <begin position="2456"/>
        <end position="2474"/>
    </location>
</feature>
<feature type="disulfide bond" evidence="5">
    <location>
        <begin position="2468"/>
        <end position="2483"/>
    </location>
</feature>
<feature type="disulfide bond" evidence="6">
    <location>
        <begin position="2486"/>
        <end position="2522"/>
    </location>
</feature>
<feature type="disulfide bond" evidence="6">
    <location>
        <begin position="2497"/>
        <end position="2501"/>
    </location>
</feature>
<feature type="disulfide bond" evidence="6">
    <location>
        <begin position="2532"/>
        <end position="2537"/>
    </location>
</feature>
<feature type="disulfide bond" evidence="6">
    <location>
        <begin position="2552"/>
        <end position="2589"/>
    </location>
</feature>
<feature type="disulfide bond" evidence="6">
    <location>
        <begin position="2556"/>
        <end position="2594"/>
    </location>
</feature>
<feature type="disulfide bond" evidence="6">
    <location>
        <begin position="2567"/>
        <end position="2579"/>
    </location>
</feature>
<feature type="disulfide bond" evidence="6">
    <location>
        <begin position="2701"/>
        <end position="2739"/>
    </location>
</feature>
<feature type="disulfide bond" evidence="6">
    <location>
        <begin position="2712"/>
        <end position="2716"/>
    </location>
</feature>
<feature type="disulfide bond" evidence="6">
    <location>
        <begin position="2749"/>
        <end position="2753"/>
    </location>
</feature>
<feature type="disulfide bond" evidence="6">
    <location>
        <begin position="2769"/>
        <end position="2807"/>
    </location>
</feature>
<feature type="disulfide bond" evidence="6">
    <location>
        <begin position="2773"/>
        <end position="2812"/>
    </location>
</feature>
<feature type="disulfide bond" evidence="6">
    <location>
        <begin position="2789"/>
        <end position="2797"/>
    </location>
</feature>
<feature type="disulfide bond" evidence="6">
    <location>
        <begin position="2827"/>
        <end position="2862"/>
    </location>
</feature>
<feature type="disulfide bond" evidence="6">
    <location>
        <begin position="2831"/>
        <end position="2867"/>
    </location>
</feature>
<feature type="disulfide bond" evidence="6">
    <location>
        <begin position="2842"/>
        <end position="2852"/>
    </location>
</feature>
<feature type="disulfide bond" evidence="6">
    <location>
        <begin position="2970"/>
        <end position="3008"/>
    </location>
</feature>
<feature type="disulfide bond" evidence="6">
    <location>
        <begin position="2981"/>
        <end position="2985"/>
    </location>
</feature>
<feature type="disulfide bond" evidence="6">
    <location>
        <begin position="3018"/>
        <end position="3023"/>
    </location>
</feature>
<feature type="disulfide bond" evidence="6">
    <location>
        <begin position="3180"/>
        <end position="3229"/>
    </location>
</feature>
<feature type="disulfide bond" evidence="6">
    <location>
        <begin position="3184"/>
        <end position="3234"/>
    </location>
</feature>
<feature type="disulfide bond" evidence="6">
    <location>
        <begin position="3195"/>
        <end position="3219"/>
    </location>
</feature>
<feature type="disulfide bond" evidence="6">
    <location>
        <begin position="3249"/>
        <end position="3286"/>
    </location>
</feature>
<feature type="disulfide bond" evidence="6">
    <location>
        <begin position="3253"/>
        <end position="3291"/>
    </location>
</feature>
<feature type="disulfide bond" evidence="6">
    <location>
        <begin position="3264"/>
        <end position="3276"/>
    </location>
</feature>
<feature type="disulfide bond" evidence="6">
    <location>
        <begin position="3405"/>
        <end position="3448"/>
    </location>
</feature>
<feature type="disulfide bond" evidence="6">
    <location>
        <begin position="3409"/>
        <end position="3454"/>
    </location>
</feature>
<feature type="disulfide bond" evidence="6">
    <location>
        <begin position="3420"/>
        <end position="3432"/>
    </location>
</feature>
<feature type="disulfide bond" evidence="6">
    <location>
        <begin position="3469"/>
        <end position="3504"/>
    </location>
</feature>
<feature type="disulfide bond" evidence="6">
    <location>
        <begin position="3472"/>
        <end position="3511"/>
    </location>
</feature>
<feature type="disulfide bond" evidence="6">
    <location>
        <begin position="3482"/>
        <end position="3494"/>
    </location>
</feature>
<feature type="disulfide bond" evidence="6">
    <location>
        <begin position="3642"/>
        <end position="3672"/>
    </location>
</feature>
<feature type="disulfide bond" evidence="6">
    <location>
        <begin position="3646"/>
        <end position="3677"/>
    </location>
</feature>
<feature type="disulfide bond" evidence="6">
    <location>
        <begin position="3657"/>
        <end position="3662"/>
    </location>
</feature>
<feature type="disulfide bond" evidence="6">
    <location>
        <begin position="3818"/>
        <end position="3856"/>
    </location>
</feature>
<feature type="disulfide bond" evidence="6">
    <location>
        <begin position="3822"/>
        <end position="3861"/>
    </location>
</feature>
<feature type="disulfide bond" evidence="6">
    <location>
        <begin position="3834"/>
        <end position="3846"/>
    </location>
</feature>
<feature type="disulfide bond" evidence="6">
    <location>
        <begin position="3943"/>
        <end position="3979"/>
    </location>
</feature>
<feature type="disulfide bond" evidence="6">
    <location>
        <begin position="3954"/>
        <end position="3958"/>
    </location>
</feature>
<feature type="disulfide bond" evidence="6">
    <location>
        <begin position="3992"/>
        <end position="3997"/>
    </location>
</feature>
<feature type="disulfide bond" evidence="6">
    <location>
        <begin position="4012"/>
        <end position="4049"/>
    </location>
</feature>
<feature type="disulfide bond" evidence="6">
    <location>
        <begin position="4016"/>
        <end position="4054"/>
    </location>
</feature>
<feature type="disulfide bond" evidence="6">
    <location>
        <begin position="4027"/>
        <end position="4039"/>
    </location>
</feature>
<feature type="disulfide bond" evidence="6">
    <location>
        <begin position="4156"/>
        <end position="4192"/>
    </location>
</feature>
<feature type="disulfide bond" evidence="6">
    <location>
        <begin position="4167"/>
        <end position="4171"/>
    </location>
</feature>
<feature type="disulfide bond" evidence="6">
    <location>
        <begin position="4202"/>
        <end position="4207"/>
    </location>
</feature>
<feature type="disulfide bond" evidence="6">
    <location>
        <begin position="4261"/>
        <end position="4298"/>
    </location>
</feature>
<feature type="disulfide bond" evidence="6">
    <location>
        <begin position="4265"/>
        <end position="4303"/>
    </location>
</feature>
<feature type="disulfide bond" evidence="6">
    <location>
        <begin position="4276"/>
        <end position="4288"/>
    </location>
</feature>
<feature type="disulfide bond" evidence="6">
    <location>
        <begin position="4365"/>
        <end position="4402"/>
    </location>
</feature>
<feature type="disulfide bond" evidence="6">
    <location>
        <begin position="4376"/>
        <end position="4378"/>
    </location>
</feature>
<feature type="disulfide bond" evidence="6">
    <location>
        <begin position="4412"/>
        <end position="4417"/>
    </location>
</feature>
<feature type="disulfide bond" evidence="6">
    <location>
        <begin position="4609"/>
        <end position="4643"/>
    </location>
</feature>
<feature type="disulfide bond" evidence="6">
    <location>
        <begin position="4620"/>
        <end position="4624"/>
    </location>
</feature>
<feature type="disulfide bond" evidence="6">
    <location>
        <begin position="4653"/>
        <end position="4658"/>
    </location>
</feature>
<feature type="disulfide bond" evidence="6">
    <location>
        <begin position="4771"/>
        <end position="4806"/>
    </location>
</feature>
<feature type="disulfide bond" evidence="6">
    <location>
        <begin position="4775"/>
        <end position="4811"/>
    </location>
</feature>
<feature type="disulfide bond" evidence="6">
    <location>
        <begin position="4786"/>
        <end position="4795"/>
    </location>
</feature>
<feature type="disulfide bond" evidence="3">
    <location>
        <begin position="5047"/>
        <end position="5095"/>
    </location>
</feature>
<feature type="disulfide bond" evidence="3">
    <location>
        <begin position="5061"/>
        <end position="5112"/>
    </location>
</feature>
<feature type="disulfide bond" evidence="3">
    <location>
        <begin position="5071"/>
        <end position="5128"/>
    </location>
</feature>
<feature type="disulfide bond" evidence="3">
    <location>
        <begin position="5075"/>
        <end position="5130"/>
    </location>
</feature>
<evidence type="ECO:0000250" key="1">
    <source>
        <dbReference type="UniProtKB" id="P98167"/>
    </source>
</evidence>
<evidence type="ECO:0000255" key="2"/>
<evidence type="ECO:0000255" key="3">
    <source>
        <dbReference type="PROSITE-ProRule" id="PRU00039"/>
    </source>
</evidence>
<evidence type="ECO:0000255" key="4">
    <source>
        <dbReference type="PROSITE-ProRule" id="PRU00081"/>
    </source>
</evidence>
<evidence type="ECO:0000255" key="5">
    <source>
        <dbReference type="PROSITE-ProRule" id="PRU00124"/>
    </source>
</evidence>
<evidence type="ECO:0000255" key="6">
    <source>
        <dbReference type="PROSITE-ProRule" id="PRU00210"/>
    </source>
</evidence>
<evidence type="ECO:0000255" key="7">
    <source>
        <dbReference type="PROSITE-ProRule" id="PRU00220"/>
    </source>
</evidence>
<evidence type="ECO:0000255" key="8">
    <source>
        <dbReference type="PROSITE-ProRule" id="PRU00580"/>
    </source>
</evidence>
<evidence type="ECO:0000256" key="9">
    <source>
        <dbReference type="SAM" id="MobiDB-lite"/>
    </source>
</evidence>
<evidence type="ECO:0000305" key="10"/>
<evidence type="ECO:0000312" key="11">
    <source>
        <dbReference type="RGD" id="1549716"/>
    </source>
</evidence>
<comment type="function">
    <text evidence="1">Involved in the modulation of neuronal aggregation (By similarity). May be involved in developmental events during the formation of the central nervous system (By similarity).</text>
</comment>
<comment type="subcellular location">
    <subcellularLocation>
        <location evidence="1">Secreted</location>
        <location evidence="1">Extracellular space</location>
    </subcellularLocation>
</comment>
<comment type="similarity">
    <text evidence="10">Belongs to the thrombospondin family.</text>
</comment>
<sequence>MLLPALLFGMLWAPANGHWCEQIETVHVEEEVTPRREDLVPCTSLYHYSRLGWKLDLSWGGHVGLTRPPALGLCAIYKPPETRPATWNRTVRACCPGWGGIHCTEALAEASPKGHCFVTWHCQPLAGSANSSAGSLEECCAQPWGHSWWNSSSQMCLSCSGQHRPGNASSEGLLQPLAGAVGQLWSQRQRPSATCATWSGFHYQTFDGQHYHFLGQCTYLLAGAMDSTWAVHLRPSVHCPQPRQCWLVQVIMGPEEVLIQDGEVSVKGQPVPVGESQLLHGMSLQWQGDWLVLSGGLGVVVRLDRSSSIIISVDHEFWGRTQGLCGLYNGRPEDDFVEPGGGLAMLAATFGNSWRLPGYEPGCLDTVEVARGCEGLLEGTLTGLEAGKLQAQAQDLCHQLLEDPFSQCHGQVPPDEYHETCLFAYCVGATAGSGPEEQVKAVCATFANYAQACARQHIYVHWRKPGFCERLCPGGQLYSDCISSCPPSCSAVAQGEEGSCGKECVSGCECPTGLFWDGALCVPAAHCPCYYRRQRYAPGDTVKQQCNPCVCQDGRWHCAQAPCPAECAVGGDGHYCTFDGRSFSFRGNPGCQYSLVQDSVKGQLLVVLEHGACETGSCLHALSAFLGKTHIQLRYSGAVLVDGQDVDLPWIGAEGFNVSHASSTFLLLRWPGAWVLWGVADPAVYITLDPRHAYQVQGLCGTFTWKQQDDFLTPAGDIETSVTAFASKFQVSGDGRCPLVDNTPLSSCSTYSQRLAFAEAACAALHGHAFQECHGLVEREPFRLRCLESMCSCAPGRDCLCSVLSAYAHHCAQEGVLLQWRNETLCSVPCPGGQVYQECAPACGHYCGEPEDCKELGSCVAGCNCPPGLLWDLEGQCVPPSMCPCQLGGHRYAFNTTTTLKDCSHCICQERGLWNCIAHHCPRQWALCPQELIYAPGACLLTCDSLGANHSCLAGSTDGCVCPSGTVLLDKHCVSPDLCPCRHNGQWYPPNATIQEDCNICVCQNQRWHCTGQRCSGWCQASGAPHYVTFDGLVFTFPGACEYLLVREAGGRFSVSIQNLPCGASGLTCTKALAVRLDSTVVHMLRGQAVTVNGVSIKLPKVYTGPGLSLHHAGLFLLLTTRLGLTLLWDGGTRVLVQLSPHFHGRVTGLCGNFDGDVSNDLRSRQGVLEPTAELTAHSWRLNPLCPEPGDLPHPCSVNAHRVNWARAHCEVILQPIFAPCHTEVPPQQYYEWCVYDACGCDTGGDCECLCSAIATYADECARHRHHVRWRSQELCPLQCEGGQVYEPCGSTCPPTCHDHHPELRWHCQAITCVEGCFCPEGTLLHGGTCVELTDCPCEWQGSFFPPGAVLQKDCGNCTCQESQWHCNPSGAPCEEMEPGCAEGEALCRESGHCVPLEWLCDNQDDCGDGSDEEGCDTSVCGEGQMSCQSGRCLPLSLICDGQDDCGDGTDEQGCLCPQGFLACADGRCLPPALLCDGHPDCLDAADEESCLGWVSCTSGEVSCVDGPCIRTIQLCDGVWDCPDGADEGPVHCSSPSLPTPPAGIGQNPSTSSPDTSPSPVGSASPASPCSLSEFQCNSGECTPRGWRCDREEDCTDGSDELDCGGPCKLYQMPCAHGPHCLSPGQLCDGVAQCPDGSDEDPDVCEERSASGGPNGTAVPCPEFSCPNGTCIDFLLVCDGSPDCELADETEPSLDEQGCGTWGSWGPWEPCSQTCGPGIQSRNRNCSISSLHVLQNCPGLQHQSQSCFTEACPVDGEWSSWSLWSPCSEPCGGTMTRHRQCRPPQNGGQDCALLPGSTHSTHQTSPCPQEGCLNVTCFGELVFRPCAPCPLTCDDISGEAVCSPDRPCSSPGCWCPEGKVLGTEGRCVRPRQCPCLVDGIRYWPGQRIKMDCQLCFCQDGQPHRCRPNPECAVDCGWSSWSPWAECLGPCSSQSLQWSFRSPNNPRLSGHGRQCRGIHRKARRCQTEPCEGCEQWGLTYHVGERWRGGPCTVCECLHRSITRCSPYCPIGSCPQSWVLVEGMGESCCHCALPGKNQTMIPVTTPAPVPTPSPQIGASLVTYVLPPMSDACYSPLGLAGLPTWAPSQPLEHSTRAAPVEAPTAGPGPREDAYAEWHTQPLYLQLDLLWPRNLTGIMVQRAGSSAAYISNLSLQFSSDGLQWHSVLNSLSSTLPPPKPSPESSNHMVPEVWTFDQMVQARYIRVWPHGSHLRDNNQQDIFLWVELLGCKPVPPLAPLCPGTRHRCANGDCALKGGPCDGAVDCEDGSDEEGCGPLRASTASRVHSTARTPALSPTQPGKFPFHPREGLADMEHQQPKQESPMPSAGVSPSASEGLLPVSGQSMQTLTTTSTFPPGLKSLHPGMAAVTVHSPHSVMPGTPVGQSVSPRPFPLMRCGPGQVPCDVLGCVEQEQLCDGREDCLDGSDEQHCASPEPFTVPTTALPGLPASRALCSPSQLSCGSGECLPLEHRCDLQVNCQDGSDEDDCVDCVLAPWSGWSDCSRSCGLGLIFQHRELLRPPLPGGSCLLDQLRSQPCFVQACPVAGAWAKWGPWEPCSVSCGGGHQSRQRSCVDPPPKNGGAPCPGPSHEKVLCNLQLCPGDTDCEPGRVHVNAELCQKGLLPPCPPSCLDPEANRSCSGHCVEGCRCPPGLFLQDSHCLPLSECPCLVGQKLMQPGLAFLLDNCSQCICESGILLCKPAACSQSCGWSAWSPWTACDHSCGSGVRARFRSPTNPPAAFGGSPCEGDRQELQACYTDCGTDIPGWTPWTSWSSCSQSCLVPGGDPGRRQRSRLCPSSRDTFCPGEATQEEPCSPSLCPVPSAWGLWASWSACSASCNGGIQTRGRSCSGSAPGNPVCLGPHTQTRDCNVHPCTAQCPGNMVFRSAEKCLEEGGPCPQLCLAQDPGVECTGSCAPGCSCPPGLFLHNASCLPRSQCPCQLHGQLYAPGAVARLDCNNCTCSSGEMVCTSERCPVACGWSPWTPWSPCSQSCNVGIRRRFRAGTAPPAAFGGAECRGPNLDAEFCTLRPCQGPGAAWSSWTPCSVPCGGGYRNRTQGSGRHSPVEFSTCSLQPCAGPVPGVCPKDQQWLDCAQGPASCAHLSTPREANQTCHPGCYCLSGMLLLNNVCVPAQDCPCAHRGRLHSPGSAVILPCENCSCVSGLITNCSSWPCEEGQPAWSSWTPWSVCSASCSPARRHRRRFCVRPSTTAPFSLDLPTTVAAPTMLCPGPEAEEEPCLLPGCNQAGVWGPWSPWSGCSRSCGGGLRSRTRACDKPPPQGLGDFCEGPQAQGEACQAQPCPVANCSTIEGAEYSPCGPPCPRSCDDLVHCMWHCQPGCYCPPGKVLSADGAICVQPHHCSCLDLLTGKRHHPGSQLMRPDGCNHCTCMEGRLNCTDLPCQVSGDWCPWSEWTACSQPCRGQTRTRSRACVCPAPQHGGAPCPEEAGETGVQHQMEACPNPTACPVDGAWSPWGSWSPCDACLGQSYRSRMCSHPPPSDGGTPCLGGHQQSRPCRNSSTPCTDCGGGQDLLPCGQPCPHSCQDLSLGSTCQPGSSGCQSGCGCPPGQLSQDGLCVFPADCHCHFQPKAMGIPENQSRSVGSALSSWESLEPGEVVTGPCDNCTCVAGVLQCHEVPSCPGPGIWSSWGPWEKCSVPCGGGEQLRSRQCARPPCPGLAQQSRTCHIHVCRETGCPAGRLYRECQPSEGCPFSCAHVTGQVACFSESCEEGCHCPEGTFQHHSACVQECPCVLTVSLLQELGVASTALRSYPVLLGDEGQPLGPGDELDPGQMLQTVCGNCSCVHGKLSCSMEECSRVRGYFGPWGMWSLCSHSCGGLGTRTRTRQCVLPTLAPAGLSCRGPLQDLEYCFSPECPGTAGSTVEPVTGLAGGWGPWSPWSPCSHSCTDLTHPAWRSRTRLCLANCTVGDSSQERPCNLPSCTTLPLCPGPGCGSENCFWTSWAPWEPCSRSCGVGQQRRLRAYHPPGPGGHWCPDILTAYQERRFCNLRACPVPGGWSHWSPWSWCDRSCGGGRSLRSRSCSSPPPKNGGASCVGERHHVRSCNPMPCEKDCPAGMEMVSCANRCPYSCSDLQEAVMCQEDQACQLGCRCSEGFLEQDGGCVPVGHCECTDAQGRSWAPGSQHQDACNNCSCQAGQLSCTAQPCPPPAHCAWSHWSAWSACSHSCGPHGQQSRFRSSTSGSWALECQKEQSQSQPCPEDPCPPLCLHEAHLHVLGDNWLHGECQQCSCTPEGVICKDTDCAVPGGWTLWSSWSYCSVSCGGGSQVRTRSCMVSAPQHGSPSCQGPDTQTQHCGQQLCLQLLEICSWGPWGPCSRSCGTGLASRSGSCPCLLTKEDSECNDTFSGLDTQACYPGPCQEDCMWSDWSSWTRCSCKILVQQRYRHQVPAPGQAGEGTLCTGLDGHFRPCAIGNCSEDSCLPPFEFQSCGSPCAGLCATHLSHQLCQDLPPCQPGCYCPMGLLEQDGGCILPEQCNCWHTSGEGARVTLAPGHRLQLGCKECVCQSGELQCSSQGCEGLLPLTGWSEWSPCGPCLPQSALAPDSRTALEVHWPLNTSVTLLASEQYRHRLCLDPETGRPWAGDPALCTVPLSQQRLCSDPGACHDTCQWGPWGPWSPCQVPCSGGFKLRWREASDNSVGECRGPWAQTESCNMGSCPGESCETRDTVFTLDCANQCPRSCADLWEGVQCLQGPCSPGCRCPPGQLVQDGHCVPISSCRCGLPSANASWELAPTQVVQLDCHNCTCINGTLMCPYPECPVLGPWSPWSECSAVCGGGTMVRYRSCEEHPDSAPCQALDMEQRVECNLQTCPECPPGQVLSTCATLCPSFCSHLWPGTICVREPCQLGCGCPGGQLLHSGTCIPPEACPCTRLSLPWGLTLPLEEQAQELPSGTVLTWNCTHCTCQGGVFTCSHTDCQECPPGEILQLGELRPCEKTCLEMNKTQAWSNCTEAQVPGCVCQLGHFRSHTGLCVPEDHCECWHHGSPHLPGSEWQEACESCRCLHGKSVCTQHCPELSCAQGEVVVQEPGSCCPICQQDTLEEEPVSCRHLTELRNLTKGPCHLDQVEVSYCSGHCRSSTNVMTEEPYLQSQCDCCSYRLDPDSPVRILNLLCPDGRTEPVLLPVIHNCHCSACQGGEFSKH</sequence>
<gene>
    <name evidence="11" type="primary">Sspo</name>
</gene>
<name>SSPO_RAT</name>
<keyword id="KW-0106">Calcium</keyword>
<keyword id="KW-0130">Cell adhesion</keyword>
<keyword id="KW-1015">Disulfide bond</keyword>
<keyword id="KW-0245">EGF-like domain</keyword>
<keyword id="KW-0325">Glycoprotein</keyword>
<keyword id="KW-1185">Reference proteome</keyword>
<keyword id="KW-0677">Repeat</keyword>
<keyword id="KW-0964">Secreted</keyword>
<keyword id="KW-0732">Signal</keyword>
<accession>Q700K0</accession>
<organism>
    <name type="scientific">Rattus norvegicus</name>
    <name type="common">Rat</name>
    <dbReference type="NCBI Taxonomy" id="10116"/>
    <lineage>
        <taxon>Eukaryota</taxon>
        <taxon>Metazoa</taxon>
        <taxon>Chordata</taxon>
        <taxon>Craniata</taxon>
        <taxon>Vertebrata</taxon>
        <taxon>Euteleostomi</taxon>
        <taxon>Mammalia</taxon>
        <taxon>Eutheria</taxon>
        <taxon>Euarchontoglires</taxon>
        <taxon>Glires</taxon>
        <taxon>Rodentia</taxon>
        <taxon>Myomorpha</taxon>
        <taxon>Muroidea</taxon>
        <taxon>Muridae</taxon>
        <taxon>Murinae</taxon>
        <taxon>Rattus</taxon>
    </lineage>
</organism>